<reference key="1">
    <citation type="journal article" date="2006" name="J. Bacteriol.">
        <title>Complete genome sequence of Yersinia pestis strains Antiqua and Nepal516: evidence of gene reduction in an emerging pathogen.</title>
        <authorList>
            <person name="Chain P.S.G."/>
            <person name="Hu P."/>
            <person name="Malfatti S.A."/>
            <person name="Radnedge L."/>
            <person name="Larimer F."/>
            <person name="Vergez L.M."/>
            <person name="Worsham P."/>
            <person name="Chu M.C."/>
            <person name="Andersen G.L."/>
        </authorList>
    </citation>
    <scope>NUCLEOTIDE SEQUENCE [LARGE SCALE GENOMIC DNA]</scope>
    <source>
        <strain>Nepal516</strain>
    </source>
</reference>
<reference key="2">
    <citation type="submission" date="2009-04" db="EMBL/GenBank/DDBJ databases">
        <title>Yersinia pestis Nepal516A whole genome shotgun sequencing project.</title>
        <authorList>
            <person name="Plunkett G. III"/>
            <person name="Anderson B.D."/>
            <person name="Baumler D.J."/>
            <person name="Burland V."/>
            <person name="Cabot E.L."/>
            <person name="Glasner J.D."/>
            <person name="Mau B."/>
            <person name="Neeno-Eckwall E."/>
            <person name="Perna N.T."/>
            <person name="Munk A.C."/>
            <person name="Tapia R."/>
            <person name="Green L.D."/>
            <person name="Rogers Y.C."/>
            <person name="Detter J.C."/>
            <person name="Bruce D.C."/>
            <person name="Brettin T.S."/>
        </authorList>
    </citation>
    <scope>NUCLEOTIDE SEQUENCE [LARGE SCALE GENOMIC DNA]</scope>
    <source>
        <strain>Nepal516</strain>
    </source>
</reference>
<dbReference type="EC" id="2.3.2.6" evidence="1"/>
<dbReference type="EMBL" id="CP000305">
    <property type="protein sequence ID" value="ABG18937.1"/>
    <property type="molecule type" value="Genomic_DNA"/>
</dbReference>
<dbReference type="EMBL" id="ACNQ01000017">
    <property type="protein sequence ID" value="EEO75056.1"/>
    <property type="molecule type" value="Genomic_DNA"/>
</dbReference>
<dbReference type="RefSeq" id="WP_002211346.1">
    <property type="nucleotide sequence ID" value="NZ_ACNQ01000017.1"/>
</dbReference>
<dbReference type="SMR" id="Q1CGE3"/>
<dbReference type="GeneID" id="57977167"/>
<dbReference type="KEGG" id="ypn:YPN_2609"/>
<dbReference type="HOGENOM" id="CLU_075045_0_0_6"/>
<dbReference type="Proteomes" id="UP000008936">
    <property type="component" value="Chromosome"/>
</dbReference>
<dbReference type="GO" id="GO:0005737">
    <property type="term" value="C:cytoplasm"/>
    <property type="evidence" value="ECO:0007669"/>
    <property type="project" value="UniProtKB-SubCell"/>
</dbReference>
<dbReference type="GO" id="GO:0008914">
    <property type="term" value="F:leucyl-tRNA--protein transferase activity"/>
    <property type="evidence" value="ECO:0007669"/>
    <property type="project" value="UniProtKB-UniRule"/>
</dbReference>
<dbReference type="GO" id="GO:0030163">
    <property type="term" value="P:protein catabolic process"/>
    <property type="evidence" value="ECO:0007669"/>
    <property type="project" value="UniProtKB-UniRule"/>
</dbReference>
<dbReference type="FunFam" id="3.30.70.3550:FF:000001">
    <property type="entry name" value="Leucyl/phenylalanyl-tRNA--protein transferase"/>
    <property type="match status" value="1"/>
</dbReference>
<dbReference type="FunFam" id="3.40.630.70:FF:000001">
    <property type="entry name" value="Leucyl/phenylalanyl-tRNA--protein transferase"/>
    <property type="match status" value="1"/>
</dbReference>
<dbReference type="Gene3D" id="3.40.630.70">
    <property type="entry name" value="Leucyl/phenylalanyl-tRNA-protein transferase, C-terminal domain"/>
    <property type="match status" value="1"/>
</dbReference>
<dbReference type="Gene3D" id="3.30.70.3550">
    <property type="entry name" value="Leucyl/phenylalanyl-tRNA-protein transferase, N-terminal domain"/>
    <property type="match status" value="1"/>
</dbReference>
<dbReference type="HAMAP" id="MF_00688">
    <property type="entry name" value="Leu_Phe_trans"/>
    <property type="match status" value="1"/>
</dbReference>
<dbReference type="InterPro" id="IPR016181">
    <property type="entry name" value="Acyl_CoA_acyltransferase"/>
</dbReference>
<dbReference type="InterPro" id="IPR004616">
    <property type="entry name" value="Leu/Phe-tRNA_Trfase"/>
</dbReference>
<dbReference type="InterPro" id="IPR042203">
    <property type="entry name" value="Leu/Phe-tRNA_Trfase_C"/>
</dbReference>
<dbReference type="InterPro" id="IPR042221">
    <property type="entry name" value="Leu/Phe-tRNA_Trfase_N"/>
</dbReference>
<dbReference type="NCBIfam" id="TIGR00667">
    <property type="entry name" value="aat"/>
    <property type="match status" value="1"/>
</dbReference>
<dbReference type="PANTHER" id="PTHR30098">
    <property type="entry name" value="LEUCYL/PHENYLALANYL-TRNA--PROTEIN TRANSFERASE"/>
    <property type="match status" value="1"/>
</dbReference>
<dbReference type="PANTHER" id="PTHR30098:SF2">
    <property type="entry name" value="LEUCYL_PHENYLALANYL-TRNA--PROTEIN TRANSFERASE"/>
    <property type="match status" value="1"/>
</dbReference>
<dbReference type="Pfam" id="PF03588">
    <property type="entry name" value="Leu_Phe_trans"/>
    <property type="match status" value="1"/>
</dbReference>
<dbReference type="SUPFAM" id="SSF55729">
    <property type="entry name" value="Acyl-CoA N-acyltransferases (Nat)"/>
    <property type="match status" value="1"/>
</dbReference>
<accession>Q1CGE3</accession>
<accession>C4GVV6</accession>
<gene>
    <name evidence="1" type="primary">aat</name>
    <name type="ordered locus">YPN_2609</name>
    <name type="ORF">YP516_2941</name>
</gene>
<organism>
    <name type="scientific">Yersinia pestis bv. Antiqua (strain Nepal516)</name>
    <dbReference type="NCBI Taxonomy" id="377628"/>
    <lineage>
        <taxon>Bacteria</taxon>
        <taxon>Pseudomonadati</taxon>
        <taxon>Pseudomonadota</taxon>
        <taxon>Gammaproteobacteria</taxon>
        <taxon>Enterobacterales</taxon>
        <taxon>Yersiniaceae</taxon>
        <taxon>Yersinia</taxon>
    </lineage>
</organism>
<name>LFTR_YERPN</name>
<protein>
    <recommendedName>
        <fullName evidence="1">Leucyl/phenylalanyl-tRNA--protein transferase</fullName>
        <ecNumber evidence="1">2.3.2.6</ecNumber>
    </recommendedName>
    <alternativeName>
        <fullName evidence="1">L/F-transferase</fullName>
    </alternativeName>
    <alternativeName>
        <fullName evidence="1">Leucyltransferase</fullName>
    </alternativeName>
    <alternativeName>
        <fullName evidence="1">Phenyalanyltransferase</fullName>
    </alternativeName>
</protein>
<comment type="function">
    <text evidence="1">Functions in the N-end rule pathway of protein degradation where it conjugates Leu, Phe and, less efficiently, Met from aminoacyl-tRNAs to the N-termini of proteins containing an N-terminal arginine or lysine.</text>
</comment>
<comment type="catalytic activity">
    <reaction evidence="1">
        <text>N-terminal L-lysyl-[protein] + L-leucyl-tRNA(Leu) = N-terminal L-leucyl-L-lysyl-[protein] + tRNA(Leu) + H(+)</text>
        <dbReference type="Rhea" id="RHEA:12340"/>
        <dbReference type="Rhea" id="RHEA-COMP:9613"/>
        <dbReference type="Rhea" id="RHEA-COMP:9622"/>
        <dbReference type="Rhea" id="RHEA-COMP:12670"/>
        <dbReference type="Rhea" id="RHEA-COMP:12671"/>
        <dbReference type="ChEBI" id="CHEBI:15378"/>
        <dbReference type="ChEBI" id="CHEBI:65249"/>
        <dbReference type="ChEBI" id="CHEBI:78442"/>
        <dbReference type="ChEBI" id="CHEBI:78494"/>
        <dbReference type="ChEBI" id="CHEBI:133043"/>
        <dbReference type="EC" id="2.3.2.6"/>
    </reaction>
</comment>
<comment type="catalytic activity">
    <reaction evidence="1">
        <text>N-terminal L-arginyl-[protein] + L-leucyl-tRNA(Leu) = N-terminal L-leucyl-L-arginyl-[protein] + tRNA(Leu) + H(+)</text>
        <dbReference type="Rhea" id="RHEA:50416"/>
        <dbReference type="Rhea" id="RHEA-COMP:9613"/>
        <dbReference type="Rhea" id="RHEA-COMP:9622"/>
        <dbReference type="Rhea" id="RHEA-COMP:12672"/>
        <dbReference type="Rhea" id="RHEA-COMP:12673"/>
        <dbReference type="ChEBI" id="CHEBI:15378"/>
        <dbReference type="ChEBI" id="CHEBI:64719"/>
        <dbReference type="ChEBI" id="CHEBI:78442"/>
        <dbReference type="ChEBI" id="CHEBI:78494"/>
        <dbReference type="ChEBI" id="CHEBI:133044"/>
        <dbReference type="EC" id="2.3.2.6"/>
    </reaction>
</comment>
<comment type="catalytic activity">
    <reaction evidence="1">
        <text>L-phenylalanyl-tRNA(Phe) + an N-terminal L-alpha-aminoacyl-[protein] = an N-terminal L-phenylalanyl-L-alpha-aminoacyl-[protein] + tRNA(Phe)</text>
        <dbReference type="Rhea" id="RHEA:43632"/>
        <dbReference type="Rhea" id="RHEA-COMP:9668"/>
        <dbReference type="Rhea" id="RHEA-COMP:9699"/>
        <dbReference type="Rhea" id="RHEA-COMP:10636"/>
        <dbReference type="Rhea" id="RHEA-COMP:10637"/>
        <dbReference type="ChEBI" id="CHEBI:78442"/>
        <dbReference type="ChEBI" id="CHEBI:78531"/>
        <dbReference type="ChEBI" id="CHEBI:78597"/>
        <dbReference type="ChEBI" id="CHEBI:83561"/>
        <dbReference type="EC" id="2.3.2.6"/>
    </reaction>
</comment>
<comment type="subcellular location">
    <subcellularLocation>
        <location evidence="1">Cytoplasm</location>
    </subcellularLocation>
</comment>
<comment type="similarity">
    <text evidence="1">Belongs to the L/F-transferase family.</text>
</comment>
<feature type="chain" id="PRO_0000258115" description="Leucyl/phenylalanyl-tRNA--protein transferase">
    <location>
        <begin position="1"/>
        <end position="236"/>
    </location>
</feature>
<evidence type="ECO:0000255" key="1">
    <source>
        <dbReference type="HAMAP-Rule" id="MF_00688"/>
    </source>
</evidence>
<keyword id="KW-0012">Acyltransferase</keyword>
<keyword id="KW-0963">Cytoplasm</keyword>
<keyword id="KW-0808">Transferase</keyword>
<proteinExistence type="inferred from homology"/>
<sequence length="236" mass="26403">MRVTQLSSQSFIFPSPELALREPNGLLALGGDLTAPRLLAAYQRGIFPWFNPGEMILWWSPDPRAVLFPEDLHISRSMRRFIRHCPYRFTLNHAFADVISACATERDEGTWIGRDVQQAYCQLHALGHAHSLEVWLENELVGGLYGVAVGAVFCGESMFSRADNASKSALMVFCHHFTQHGGELIDCQVLNAHTASLGAVEIPRNFFLQQLSQLQFSPLPAECWLPQSLNFSSAMQ</sequence>